<proteinExistence type="inferred from homology"/>
<accession>Q4QMJ1</accession>
<evidence type="ECO:0000255" key="1">
    <source>
        <dbReference type="HAMAP-Rule" id="MF_00394"/>
    </source>
</evidence>
<protein>
    <recommendedName>
        <fullName evidence="1">Glycerol-3-phosphate dehydrogenase [NAD(P)+]</fullName>
        <ecNumber evidence="1">1.1.1.94</ecNumber>
    </recommendedName>
    <alternativeName>
        <fullName evidence="1">NAD(P)(+)-dependent glycerol-3-phosphate dehydrogenase</fullName>
    </alternativeName>
    <alternativeName>
        <fullName evidence="1">NAD(P)H-dependent dihydroxyacetone-phosphate reductase</fullName>
    </alternativeName>
</protein>
<name>GPDA_HAEI8</name>
<comment type="function">
    <text evidence="1">Catalyzes the reduction of the glycolytic intermediate dihydroxyacetone phosphate (DHAP) to sn-glycerol 3-phosphate (G3P), the key precursor for phospholipid synthesis.</text>
</comment>
<comment type="catalytic activity">
    <reaction evidence="1">
        <text>sn-glycerol 3-phosphate + NAD(+) = dihydroxyacetone phosphate + NADH + H(+)</text>
        <dbReference type="Rhea" id="RHEA:11092"/>
        <dbReference type="ChEBI" id="CHEBI:15378"/>
        <dbReference type="ChEBI" id="CHEBI:57540"/>
        <dbReference type="ChEBI" id="CHEBI:57597"/>
        <dbReference type="ChEBI" id="CHEBI:57642"/>
        <dbReference type="ChEBI" id="CHEBI:57945"/>
        <dbReference type="EC" id="1.1.1.94"/>
    </reaction>
    <physiologicalReaction direction="right-to-left" evidence="1">
        <dbReference type="Rhea" id="RHEA:11094"/>
    </physiologicalReaction>
</comment>
<comment type="catalytic activity">
    <reaction evidence="1">
        <text>sn-glycerol 3-phosphate + NADP(+) = dihydroxyacetone phosphate + NADPH + H(+)</text>
        <dbReference type="Rhea" id="RHEA:11096"/>
        <dbReference type="ChEBI" id="CHEBI:15378"/>
        <dbReference type="ChEBI" id="CHEBI:57597"/>
        <dbReference type="ChEBI" id="CHEBI:57642"/>
        <dbReference type="ChEBI" id="CHEBI:57783"/>
        <dbReference type="ChEBI" id="CHEBI:58349"/>
        <dbReference type="EC" id="1.1.1.94"/>
    </reaction>
    <physiologicalReaction direction="right-to-left" evidence="1">
        <dbReference type="Rhea" id="RHEA:11098"/>
    </physiologicalReaction>
</comment>
<comment type="pathway">
    <text evidence="1">Membrane lipid metabolism; glycerophospholipid metabolism.</text>
</comment>
<comment type="subcellular location">
    <subcellularLocation>
        <location evidence="1">Cytoplasm</location>
    </subcellularLocation>
</comment>
<comment type="similarity">
    <text evidence="1">Belongs to the NAD-dependent glycerol-3-phosphate dehydrogenase family.</text>
</comment>
<sequence length="335" mass="36449">MITSQTPITVLGAGSYGTALAITFSRNGSPTHLWGHNPVHIAQMQTERQNYRFLPDVIFPEDLHLESNLAQAMEYSQDILIVVPSHAFGEILIKIKPHLKAHHRLIWATKGLERNTGRLLQTVVEEQLGTQYPLAVLSGPTFAKELAQGLPSAITLAANNEQFAREFQSRIHCSKGFRVYINSDMTGVQLGGAIKNVIAIGAGISDGMGFGANARTALITRGIAEITRLGISLGANTNTFMGMSGLGDLVLTCTDNQSRNRRFGLMLGKGLDAQMAMENIGQVVEGFYNTKEAYLLAQRQGVEMPITEQIYQMLFCGKNAQDVAISLLGRACKGE</sequence>
<feature type="chain" id="PRO_0000255318" description="Glycerol-3-phosphate dehydrogenase [NAD(P)+]">
    <location>
        <begin position="1"/>
        <end position="335"/>
    </location>
</feature>
<feature type="active site" description="Proton acceptor" evidence="1">
    <location>
        <position position="195"/>
    </location>
</feature>
<feature type="binding site" evidence="1">
    <location>
        <position position="15"/>
    </location>
    <ligand>
        <name>NADPH</name>
        <dbReference type="ChEBI" id="CHEBI:57783"/>
    </ligand>
</feature>
<feature type="binding site" evidence="1">
    <location>
        <position position="16"/>
    </location>
    <ligand>
        <name>NADPH</name>
        <dbReference type="ChEBI" id="CHEBI:57783"/>
    </ligand>
</feature>
<feature type="binding site" evidence="1">
    <location>
        <position position="36"/>
    </location>
    <ligand>
        <name>NADPH</name>
        <dbReference type="ChEBI" id="CHEBI:57783"/>
    </ligand>
</feature>
<feature type="binding site" evidence="1">
    <location>
        <position position="110"/>
    </location>
    <ligand>
        <name>NADPH</name>
        <dbReference type="ChEBI" id="CHEBI:57783"/>
    </ligand>
</feature>
<feature type="binding site" evidence="1">
    <location>
        <position position="110"/>
    </location>
    <ligand>
        <name>sn-glycerol 3-phosphate</name>
        <dbReference type="ChEBI" id="CHEBI:57597"/>
    </ligand>
</feature>
<feature type="binding site" evidence="1">
    <location>
        <position position="139"/>
    </location>
    <ligand>
        <name>sn-glycerol 3-phosphate</name>
        <dbReference type="ChEBI" id="CHEBI:57597"/>
    </ligand>
</feature>
<feature type="binding site" evidence="1">
    <location>
        <position position="141"/>
    </location>
    <ligand>
        <name>sn-glycerol 3-phosphate</name>
        <dbReference type="ChEBI" id="CHEBI:57597"/>
    </ligand>
</feature>
<feature type="binding site" evidence="1">
    <location>
        <position position="143"/>
    </location>
    <ligand>
        <name>NADPH</name>
        <dbReference type="ChEBI" id="CHEBI:57783"/>
    </ligand>
</feature>
<feature type="binding site" evidence="1">
    <location>
        <position position="195"/>
    </location>
    <ligand>
        <name>sn-glycerol 3-phosphate</name>
        <dbReference type="ChEBI" id="CHEBI:57597"/>
    </ligand>
</feature>
<feature type="binding site" evidence="1">
    <location>
        <position position="248"/>
    </location>
    <ligand>
        <name>sn-glycerol 3-phosphate</name>
        <dbReference type="ChEBI" id="CHEBI:57597"/>
    </ligand>
</feature>
<feature type="binding site" evidence="1">
    <location>
        <position position="258"/>
    </location>
    <ligand>
        <name>sn-glycerol 3-phosphate</name>
        <dbReference type="ChEBI" id="CHEBI:57597"/>
    </ligand>
</feature>
<feature type="binding site" evidence="1">
    <location>
        <position position="259"/>
    </location>
    <ligand>
        <name>NADPH</name>
        <dbReference type="ChEBI" id="CHEBI:57783"/>
    </ligand>
</feature>
<feature type="binding site" evidence="1">
    <location>
        <position position="259"/>
    </location>
    <ligand>
        <name>sn-glycerol 3-phosphate</name>
        <dbReference type="ChEBI" id="CHEBI:57597"/>
    </ligand>
</feature>
<feature type="binding site" evidence="1">
    <location>
        <position position="260"/>
    </location>
    <ligand>
        <name>sn-glycerol 3-phosphate</name>
        <dbReference type="ChEBI" id="CHEBI:57597"/>
    </ligand>
</feature>
<feature type="binding site" evidence="1">
    <location>
        <position position="283"/>
    </location>
    <ligand>
        <name>NADPH</name>
        <dbReference type="ChEBI" id="CHEBI:57783"/>
    </ligand>
</feature>
<feature type="binding site" evidence="1">
    <location>
        <position position="285"/>
    </location>
    <ligand>
        <name>NADPH</name>
        <dbReference type="ChEBI" id="CHEBI:57783"/>
    </ligand>
</feature>
<keyword id="KW-0963">Cytoplasm</keyword>
<keyword id="KW-0444">Lipid biosynthesis</keyword>
<keyword id="KW-0443">Lipid metabolism</keyword>
<keyword id="KW-0520">NAD</keyword>
<keyword id="KW-0521">NADP</keyword>
<keyword id="KW-0547">Nucleotide-binding</keyword>
<keyword id="KW-0560">Oxidoreductase</keyword>
<keyword id="KW-0594">Phospholipid biosynthesis</keyword>
<keyword id="KW-1208">Phospholipid metabolism</keyword>
<reference key="1">
    <citation type="journal article" date="2005" name="J. Bacteriol.">
        <title>Genomic sequence of an otitis media isolate of nontypeable Haemophilus influenzae: comparative study with H. influenzae serotype d, strain KW20.</title>
        <authorList>
            <person name="Harrison A."/>
            <person name="Dyer D.W."/>
            <person name="Gillaspy A."/>
            <person name="Ray W.C."/>
            <person name="Mungur R."/>
            <person name="Carson M.B."/>
            <person name="Zhong H."/>
            <person name="Gipson J."/>
            <person name="Gipson M."/>
            <person name="Johnson L.S."/>
            <person name="Lewis L."/>
            <person name="Bakaletz L.O."/>
            <person name="Munson R.S. Jr."/>
        </authorList>
    </citation>
    <scope>NUCLEOTIDE SEQUENCE [LARGE SCALE GENOMIC DNA]</scope>
    <source>
        <strain>86-028NP</strain>
    </source>
</reference>
<gene>
    <name evidence="1" type="primary">gpsA</name>
    <name type="ordered locus">NTHI0860</name>
</gene>
<dbReference type="EC" id="1.1.1.94" evidence="1"/>
<dbReference type="EMBL" id="CP000057">
    <property type="protein sequence ID" value="AAX87756.1"/>
    <property type="molecule type" value="Genomic_DNA"/>
</dbReference>
<dbReference type="RefSeq" id="WP_011272190.1">
    <property type="nucleotide sequence ID" value="NC_007146.2"/>
</dbReference>
<dbReference type="SMR" id="Q4QMJ1"/>
<dbReference type="GeneID" id="93219736"/>
<dbReference type="KEGG" id="hit:NTHI0860"/>
<dbReference type="HOGENOM" id="CLU_033449_0_2_6"/>
<dbReference type="UniPathway" id="UPA00940"/>
<dbReference type="Proteomes" id="UP000002525">
    <property type="component" value="Chromosome"/>
</dbReference>
<dbReference type="GO" id="GO:0005829">
    <property type="term" value="C:cytosol"/>
    <property type="evidence" value="ECO:0007669"/>
    <property type="project" value="TreeGrafter"/>
</dbReference>
<dbReference type="GO" id="GO:0047952">
    <property type="term" value="F:glycerol-3-phosphate dehydrogenase [NAD(P)+] activity"/>
    <property type="evidence" value="ECO:0007669"/>
    <property type="project" value="UniProtKB-UniRule"/>
</dbReference>
<dbReference type="GO" id="GO:0051287">
    <property type="term" value="F:NAD binding"/>
    <property type="evidence" value="ECO:0007669"/>
    <property type="project" value="InterPro"/>
</dbReference>
<dbReference type="GO" id="GO:0005975">
    <property type="term" value="P:carbohydrate metabolic process"/>
    <property type="evidence" value="ECO:0007669"/>
    <property type="project" value="InterPro"/>
</dbReference>
<dbReference type="GO" id="GO:0046167">
    <property type="term" value="P:glycerol-3-phosphate biosynthetic process"/>
    <property type="evidence" value="ECO:0007669"/>
    <property type="project" value="UniProtKB-UniRule"/>
</dbReference>
<dbReference type="GO" id="GO:0046168">
    <property type="term" value="P:glycerol-3-phosphate catabolic process"/>
    <property type="evidence" value="ECO:0007669"/>
    <property type="project" value="InterPro"/>
</dbReference>
<dbReference type="GO" id="GO:0046474">
    <property type="term" value="P:glycerophospholipid biosynthetic process"/>
    <property type="evidence" value="ECO:0007669"/>
    <property type="project" value="TreeGrafter"/>
</dbReference>
<dbReference type="FunFam" id="1.10.1040.10:FF:000001">
    <property type="entry name" value="Glycerol-3-phosphate dehydrogenase [NAD(P)+]"/>
    <property type="match status" value="1"/>
</dbReference>
<dbReference type="FunFam" id="3.40.50.720:FF:000019">
    <property type="entry name" value="Glycerol-3-phosphate dehydrogenase [NAD(P)+]"/>
    <property type="match status" value="1"/>
</dbReference>
<dbReference type="Gene3D" id="1.10.1040.10">
    <property type="entry name" value="N-(1-d-carboxylethyl)-l-norvaline Dehydrogenase, domain 2"/>
    <property type="match status" value="1"/>
</dbReference>
<dbReference type="Gene3D" id="3.40.50.720">
    <property type="entry name" value="NAD(P)-binding Rossmann-like Domain"/>
    <property type="match status" value="1"/>
</dbReference>
<dbReference type="HAMAP" id="MF_00394">
    <property type="entry name" value="NAD_Glyc3P_dehydrog"/>
    <property type="match status" value="1"/>
</dbReference>
<dbReference type="InterPro" id="IPR008927">
    <property type="entry name" value="6-PGluconate_DH-like_C_sf"/>
</dbReference>
<dbReference type="InterPro" id="IPR013328">
    <property type="entry name" value="6PGD_dom2"/>
</dbReference>
<dbReference type="InterPro" id="IPR006168">
    <property type="entry name" value="G3P_DH_NAD-dep"/>
</dbReference>
<dbReference type="InterPro" id="IPR006109">
    <property type="entry name" value="G3P_DH_NAD-dep_C"/>
</dbReference>
<dbReference type="InterPro" id="IPR011128">
    <property type="entry name" value="G3P_DH_NAD-dep_N"/>
</dbReference>
<dbReference type="InterPro" id="IPR036291">
    <property type="entry name" value="NAD(P)-bd_dom_sf"/>
</dbReference>
<dbReference type="NCBIfam" id="NF000939">
    <property type="entry name" value="PRK00094.1-1"/>
    <property type="match status" value="1"/>
</dbReference>
<dbReference type="NCBIfam" id="NF000940">
    <property type="entry name" value="PRK00094.1-2"/>
    <property type="match status" value="1"/>
</dbReference>
<dbReference type="NCBIfam" id="NF000942">
    <property type="entry name" value="PRK00094.1-4"/>
    <property type="match status" value="1"/>
</dbReference>
<dbReference type="PANTHER" id="PTHR11728">
    <property type="entry name" value="GLYCEROL-3-PHOSPHATE DEHYDROGENASE"/>
    <property type="match status" value="1"/>
</dbReference>
<dbReference type="PANTHER" id="PTHR11728:SF1">
    <property type="entry name" value="GLYCEROL-3-PHOSPHATE DEHYDROGENASE [NAD(+)] 2, CHLOROPLASTIC"/>
    <property type="match status" value="1"/>
</dbReference>
<dbReference type="Pfam" id="PF07479">
    <property type="entry name" value="NAD_Gly3P_dh_C"/>
    <property type="match status" value="1"/>
</dbReference>
<dbReference type="Pfam" id="PF01210">
    <property type="entry name" value="NAD_Gly3P_dh_N"/>
    <property type="match status" value="1"/>
</dbReference>
<dbReference type="PIRSF" id="PIRSF000114">
    <property type="entry name" value="Glycerol-3-P_dh"/>
    <property type="match status" value="1"/>
</dbReference>
<dbReference type="PRINTS" id="PR00077">
    <property type="entry name" value="GPDHDRGNASE"/>
</dbReference>
<dbReference type="SUPFAM" id="SSF48179">
    <property type="entry name" value="6-phosphogluconate dehydrogenase C-terminal domain-like"/>
    <property type="match status" value="1"/>
</dbReference>
<dbReference type="SUPFAM" id="SSF51735">
    <property type="entry name" value="NAD(P)-binding Rossmann-fold domains"/>
    <property type="match status" value="1"/>
</dbReference>
<dbReference type="PROSITE" id="PS00957">
    <property type="entry name" value="NAD_G3PDH"/>
    <property type="match status" value="1"/>
</dbReference>
<organism>
    <name type="scientific">Haemophilus influenzae (strain 86-028NP)</name>
    <dbReference type="NCBI Taxonomy" id="281310"/>
    <lineage>
        <taxon>Bacteria</taxon>
        <taxon>Pseudomonadati</taxon>
        <taxon>Pseudomonadota</taxon>
        <taxon>Gammaproteobacteria</taxon>
        <taxon>Pasteurellales</taxon>
        <taxon>Pasteurellaceae</taxon>
        <taxon>Haemophilus</taxon>
    </lineage>
</organism>